<organism>
    <name type="scientific">Trichormus variabilis (strain ATCC 29413 / PCC 7937)</name>
    <name type="common">Anabaena variabilis</name>
    <dbReference type="NCBI Taxonomy" id="240292"/>
    <lineage>
        <taxon>Bacteria</taxon>
        <taxon>Bacillati</taxon>
        <taxon>Cyanobacteriota</taxon>
        <taxon>Cyanophyceae</taxon>
        <taxon>Nostocales</taxon>
        <taxon>Nostocaceae</taxon>
        <taxon>Trichormus</taxon>
    </lineage>
</organism>
<sequence>MTKYISALGLDVGRKRVGVAGCDRTGLIATGITTVERTSFDRDVQQIQNIVNERQVQVLVVGLPYSMDGSLGFQARQVQKFTSRLAKALQLPVEYVDERLTSFQAEQMLIAENVSPSRNKGLIDRKAAALILQQWLDIRRTNAQSSVAVEY</sequence>
<evidence type="ECO:0000255" key="1">
    <source>
        <dbReference type="HAMAP-Rule" id="MF_00651"/>
    </source>
</evidence>
<accession>Q3M6H7</accession>
<proteinExistence type="inferred from homology"/>
<protein>
    <recommendedName>
        <fullName evidence="1">Putative pre-16S rRNA nuclease</fullName>
        <ecNumber evidence="1">3.1.-.-</ecNumber>
    </recommendedName>
</protein>
<gene>
    <name type="ordered locus">Ava_3804</name>
</gene>
<name>YQGF_TRIV2</name>
<keyword id="KW-0963">Cytoplasm</keyword>
<keyword id="KW-0378">Hydrolase</keyword>
<keyword id="KW-0540">Nuclease</keyword>
<keyword id="KW-0690">Ribosome biogenesis</keyword>
<dbReference type="EC" id="3.1.-.-" evidence="1"/>
<dbReference type="EMBL" id="CP000117">
    <property type="protein sequence ID" value="ABA23409.1"/>
    <property type="molecule type" value="Genomic_DNA"/>
</dbReference>
<dbReference type="SMR" id="Q3M6H7"/>
<dbReference type="STRING" id="240292.Ava_3804"/>
<dbReference type="KEGG" id="ava:Ava_3804"/>
<dbReference type="eggNOG" id="COG0816">
    <property type="taxonomic scope" value="Bacteria"/>
</dbReference>
<dbReference type="HOGENOM" id="CLU_098240_3_1_3"/>
<dbReference type="Proteomes" id="UP000002533">
    <property type="component" value="Chromosome"/>
</dbReference>
<dbReference type="GO" id="GO:0005829">
    <property type="term" value="C:cytosol"/>
    <property type="evidence" value="ECO:0007669"/>
    <property type="project" value="TreeGrafter"/>
</dbReference>
<dbReference type="GO" id="GO:0004518">
    <property type="term" value="F:nuclease activity"/>
    <property type="evidence" value="ECO:0007669"/>
    <property type="project" value="UniProtKB-KW"/>
</dbReference>
<dbReference type="GO" id="GO:0000967">
    <property type="term" value="P:rRNA 5'-end processing"/>
    <property type="evidence" value="ECO:0007669"/>
    <property type="project" value="UniProtKB-UniRule"/>
</dbReference>
<dbReference type="CDD" id="cd16964">
    <property type="entry name" value="YqgF"/>
    <property type="match status" value="1"/>
</dbReference>
<dbReference type="Gene3D" id="3.30.420.140">
    <property type="entry name" value="YqgF/RNase H-like domain"/>
    <property type="match status" value="1"/>
</dbReference>
<dbReference type="HAMAP" id="MF_00651">
    <property type="entry name" value="Nuclease_YqgF"/>
    <property type="match status" value="1"/>
</dbReference>
<dbReference type="InterPro" id="IPR012337">
    <property type="entry name" value="RNaseH-like_sf"/>
</dbReference>
<dbReference type="InterPro" id="IPR005227">
    <property type="entry name" value="YqgF"/>
</dbReference>
<dbReference type="InterPro" id="IPR006641">
    <property type="entry name" value="YqgF/RNaseH-like_dom"/>
</dbReference>
<dbReference type="InterPro" id="IPR037027">
    <property type="entry name" value="YqgF/RNaseH-like_dom_sf"/>
</dbReference>
<dbReference type="NCBIfam" id="TIGR00250">
    <property type="entry name" value="RNAse_H_YqgF"/>
    <property type="match status" value="1"/>
</dbReference>
<dbReference type="PANTHER" id="PTHR33317">
    <property type="entry name" value="POLYNUCLEOTIDYL TRANSFERASE, RIBONUCLEASE H-LIKE SUPERFAMILY PROTEIN"/>
    <property type="match status" value="1"/>
</dbReference>
<dbReference type="PANTHER" id="PTHR33317:SF4">
    <property type="entry name" value="POLYNUCLEOTIDYL TRANSFERASE, RIBONUCLEASE H-LIKE SUPERFAMILY PROTEIN"/>
    <property type="match status" value="1"/>
</dbReference>
<dbReference type="Pfam" id="PF03652">
    <property type="entry name" value="RuvX"/>
    <property type="match status" value="1"/>
</dbReference>
<dbReference type="SMART" id="SM00732">
    <property type="entry name" value="YqgFc"/>
    <property type="match status" value="1"/>
</dbReference>
<dbReference type="SUPFAM" id="SSF53098">
    <property type="entry name" value="Ribonuclease H-like"/>
    <property type="match status" value="1"/>
</dbReference>
<reference key="1">
    <citation type="journal article" date="2014" name="Stand. Genomic Sci.">
        <title>Complete genome sequence of Anabaena variabilis ATCC 29413.</title>
        <authorList>
            <person name="Thiel T."/>
            <person name="Pratte B.S."/>
            <person name="Zhong J."/>
            <person name="Goodwin L."/>
            <person name="Copeland A."/>
            <person name="Lucas S."/>
            <person name="Han C."/>
            <person name="Pitluck S."/>
            <person name="Land M.L."/>
            <person name="Kyrpides N.C."/>
            <person name="Woyke T."/>
        </authorList>
    </citation>
    <scope>NUCLEOTIDE SEQUENCE [LARGE SCALE GENOMIC DNA]</scope>
    <source>
        <strain>ATCC 29413 / PCC 7937</strain>
    </source>
</reference>
<feature type="chain" id="PRO_0000257500" description="Putative pre-16S rRNA nuclease">
    <location>
        <begin position="1"/>
        <end position="151"/>
    </location>
</feature>
<comment type="function">
    <text evidence="1">Could be a nuclease involved in processing of the 5'-end of pre-16S rRNA.</text>
</comment>
<comment type="subcellular location">
    <subcellularLocation>
        <location evidence="1">Cytoplasm</location>
    </subcellularLocation>
</comment>
<comment type="similarity">
    <text evidence="1">Belongs to the YqgF nuclease family.</text>
</comment>